<name>RNY_BACSU</name>
<keyword id="KW-0002">3D-structure</keyword>
<keyword id="KW-1003">Cell membrane</keyword>
<keyword id="KW-0175">Coiled coil</keyword>
<keyword id="KW-0255">Endonuclease</keyword>
<keyword id="KW-0378">Hydrolase</keyword>
<keyword id="KW-0472">Membrane</keyword>
<keyword id="KW-0507">mRNA processing</keyword>
<keyword id="KW-0540">Nuclease</keyword>
<keyword id="KW-1185">Reference proteome</keyword>
<keyword id="KW-0694">RNA-binding</keyword>
<keyword id="KW-0812">Transmembrane</keyword>
<keyword id="KW-1133">Transmembrane helix</keyword>
<proteinExistence type="evidence at protein level"/>
<feature type="chain" id="PRO_0000163765" description="Ribonuclease Y">
    <location>
        <begin position="1"/>
        <end position="520"/>
    </location>
</feature>
<feature type="topological domain" description="Extracellular" evidence="1">
    <location>
        <begin position="1"/>
        <end position="3"/>
    </location>
</feature>
<feature type="transmembrane region" description="Helical" evidence="1">
    <location>
        <begin position="4"/>
        <end position="24"/>
    </location>
</feature>
<feature type="topological domain" description="Cytoplasmic" evidence="1">
    <location>
        <begin position="25"/>
        <end position="520"/>
    </location>
</feature>
<feature type="domain" description="KH">
    <location>
        <begin position="210"/>
        <end position="273"/>
    </location>
</feature>
<feature type="domain" description="HD" evidence="2">
    <location>
        <begin position="336"/>
        <end position="429"/>
    </location>
</feature>
<feature type="coiled-coil region" evidence="1">
    <location>
        <begin position="29"/>
        <end position="141"/>
    </location>
</feature>
<feature type="mutagenesis site" description="Increased protein expression (replaces with transmembrane helix from EzrA).">
    <original>MTPIMMVLISILLILLGLVVGYFVRK</original>
    <variation>MEFVIGLLIVLLALFAAGYFF</variation>
    <location>
        <begin position="1"/>
        <end position="26"/>
    </location>
</feature>
<feature type="mutagenesis site" description="Impairs cleavage of the yitJ riboswitch." evidence="4">
    <original>H</original>
    <variation>A</variation>
    <location>
        <position position="368"/>
    </location>
</feature>
<feature type="mutagenesis site" description="Impairs cleavage of the yitJ riboswitch." evidence="4">
    <original>D</original>
    <variation>A</variation>
    <location>
        <position position="369"/>
    </location>
</feature>
<dbReference type="EC" id="3.1.-.-"/>
<dbReference type="EMBL" id="AL009126">
    <property type="protein sequence ID" value="CAB13569.1"/>
    <property type="molecule type" value="Genomic_DNA"/>
</dbReference>
<dbReference type="PIR" id="F69884">
    <property type="entry name" value="F69884"/>
</dbReference>
<dbReference type="RefSeq" id="NP_389578.1">
    <property type="nucleotide sequence ID" value="NC_000964.3"/>
</dbReference>
<dbReference type="RefSeq" id="WP_003221010.1">
    <property type="nucleotide sequence ID" value="NZ_OZ025638.1"/>
</dbReference>
<dbReference type="PDB" id="6F7T">
    <property type="method" value="X-ray"/>
    <property type="resolution" value="2.60 A"/>
    <property type="chains" value="C/D=79-90"/>
</dbReference>
<dbReference type="PDBsum" id="6F7T"/>
<dbReference type="SMR" id="O31774"/>
<dbReference type="FunCoup" id="O31774">
    <property type="interactions" value="127"/>
</dbReference>
<dbReference type="IntAct" id="O31774">
    <property type="interactions" value="6"/>
</dbReference>
<dbReference type="STRING" id="224308.BSU16960"/>
<dbReference type="PaxDb" id="224308-BSU16960"/>
<dbReference type="ABCD" id="O31774">
    <property type="antibodies" value="1 sequenced antibody"/>
</dbReference>
<dbReference type="DNASU" id="939680"/>
<dbReference type="EnsemblBacteria" id="CAB13569">
    <property type="protein sequence ID" value="CAB13569"/>
    <property type="gene ID" value="BSU_16960"/>
</dbReference>
<dbReference type="GeneID" id="86873796"/>
<dbReference type="GeneID" id="939680"/>
<dbReference type="KEGG" id="bsu:BSU16960"/>
<dbReference type="PATRIC" id="fig|224308.179.peg.1837"/>
<dbReference type="eggNOG" id="COG1418">
    <property type="taxonomic scope" value="Bacteria"/>
</dbReference>
<dbReference type="InParanoid" id="O31774"/>
<dbReference type="OrthoDB" id="9803205at2"/>
<dbReference type="PhylomeDB" id="O31774"/>
<dbReference type="BioCyc" id="BSUB:BSU16960-MONOMER"/>
<dbReference type="SABIO-RK" id="O31774"/>
<dbReference type="PRO" id="PR:O31774"/>
<dbReference type="Proteomes" id="UP000001570">
    <property type="component" value="Chromosome"/>
</dbReference>
<dbReference type="GO" id="GO:0005886">
    <property type="term" value="C:plasma membrane"/>
    <property type="evidence" value="ECO:0007669"/>
    <property type="project" value="UniProtKB-SubCell"/>
</dbReference>
<dbReference type="GO" id="GO:0042802">
    <property type="term" value="F:identical protein binding"/>
    <property type="evidence" value="ECO:0000353"/>
    <property type="project" value="IntAct"/>
</dbReference>
<dbReference type="GO" id="GO:0003723">
    <property type="term" value="F:RNA binding"/>
    <property type="evidence" value="ECO:0007669"/>
    <property type="project" value="UniProtKB-UniRule"/>
</dbReference>
<dbReference type="GO" id="GO:0004521">
    <property type="term" value="F:RNA endonuclease activity"/>
    <property type="evidence" value="ECO:0007669"/>
    <property type="project" value="UniProtKB-UniRule"/>
</dbReference>
<dbReference type="GO" id="GO:0006402">
    <property type="term" value="P:mRNA catabolic process"/>
    <property type="evidence" value="ECO:0007669"/>
    <property type="project" value="UniProtKB-UniRule"/>
</dbReference>
<dbReference type="GO" id="GO:0006397">
    <property type="term" value="P:mRNA processing"/>
    <property type="evidence" value="ECO:0007669"/>
    <property type="project" value="UniProtKB-KW"/>
</dbReference>
<dbReference type="CDD" id="cd00077">
    <property type="entry name" value="HDc"/>
    <property type="match status" value="1"/>
</dbReference>
<dbReference type="CDD" id="cd22431">
    <property type="entry name" value="KH-I_RNaseY"/>
    <property type="match status" value="1"/>
</dbReference>
<dbReference type="FunFam" id="1.10.3210.10:FF:000003">
    <property type="entry name" value="Ribonuclease Y"/>
    <property type="match status" value="1"/>
</dbReference>
<dbReference type="FunFam" id="3.30.1370.10:FF:000006">
    <property type="entry name" value="Ribonuclease Y"/>
    <property type="match status" value="1"/>
</dbReference>
<dbReference type="Gene3D" id="1.10.3210.10">
    <property type="entry name" value="Hypothetical protein af1432"/>
    <property type="match status" value="1"/>
</dbReference>
<dbReference type="Gene3D" id="3.30.1370.10">
    <property type="entry name" value="K Homology domain, type 1"/>
    <property type="match status" value="1"/>
</dbReference>
<dbReference type="HAMAP" id="MF_00335">
    <property type="entry name" value="RNase_Y"/>
    <property type="match status" value="1"/>
</dbReference>
<dbReference type="InterPro" id="IPR003607">
    <property type="entry name" value="HD/PDEase_dom"/>
</dbReference>
<dbReference type="InterPro" id="IPR006674">
    <property type="entry name" value="HD_domain"/>
</dbReference>
<dbReference type="InterPro" id="IPR006675">
    <property type="entry name" value="HDIG_dom"/>
</dbReference>
<dbReference type="InterPro" id="IPR004087">
    <property type="entry name" value="KH_dom"/>
</dbReference>
<dbReference type="InterPro" id="IPR004088">
    <property type="entry name" value="KH_dom_type_1"/>
</dbReference>
<dbReference type="InterPro" id="IPR036612">
    <property type="entry name" value="KH_dom_type_1_sf"/>
</dbReference>
<dbReference type="InterPro" id="IPR017705">
    <property type="entry name" value="Ribonuclease_Y"/>
</dbReference>
<dbReference type="InterPro" id="IPR022711">
    <property type="entry name" value="RNase_Y_N"/>
</dbReference>
<dbReference type="NCBIfam" id="TIGR00277">
    <property type="entry name" value="HDIG"/>
    <property type="match status" value="1"/>
</dbReference>
<dbReference type="NCBIfam" id="TIGR03319">
    <property type="entry name" value="RNase_Y"/>
    <property type="match status" value="1"/>
</dbReference>
<dbReference type="PANTHER" id="PTHR12826">
    <property type="entry name" value="RIBONUCLEASE Y"/>
    <property type="match status" value="1"/>
</dbReference>
<dbReference type="PANTHER" id="PTHR12826:SF15">
    <property type="entry name" value="RIBONUCLEASE Y"/>
    <property type="match status" value="1"/>
</dbReference>
<dbReference type="Pfam" id="PF01966">
    <property type="entry name" value="HD"/>
    <property type="match status" value="1"/>
</dbReference>
<dbReference type="Pfam" id="PF00013">
    <property type="entry name" value="KH_1"/>
    <property type="match status" value="1"/>
</dbReference>
<dbReference type="Pfam" id="PF12072">
    <property type="entry name" value="RNase_Y_N"/>
    <property type="match status" value="1"/>
</dbReference>
<dbReference type="SMART" id="SM00471">
    <property type="entry name" value="HDc"/>
    <property type="match status" value="1"/>
</dbReference>
<dbReference type="SMART" id="SM00322">
    <property type="entry name" value="KH"/>
    <property type="match status" value="1"/>
</dbReference>
<dbReference type="SUPFAM" id="SSF54791">
    <property type="entry name" value="Eukaryotic type KH-domain (KH-domain type I)"/>
    <property type="match status" value="1"/>
</dbReference>
<dbReference type="SUPFAM" id="SSF109604">
    <property type="entry name" value="HD-domain/PDEase-like"/>
    <property type="match status" value="1"/>
</dbReference>
<dbReference type="PROSITE" id="PS51831">
    <property type="entry name" value="HD"/>
    <property type="match status" value="1"/>
</dbReference>
<dbReference type="PROSITE" id="PS50084">
    <property type="entry name" value="KH_TYPE_1"/>
    <property type="match status" value="1"/>
</dbReference>
<reference key="1">
    <citation type="journal article" date="1997" name="Nature">
        <title>The complete genome sequence of the Gram-positive bacterium Bacillus subtilis.</title>
        <authorList>
            <person name="Kunst F."/>
            <person name="Ogasawara N."/>
            <person name="Moszer I."/>
            <person name="Albertini A.M."/>
            <person name="Alloni G."/>
            <person name="Azevedo V."/>
            <person name="Bertero M.G."/>
            <person name="Bessieres P."/>
            <person name="Bolotin A."/>
            <person name="Borchert S."/>
            <person name="Borriss R."/>
            <person name="Boursier L."/>
            <person name="Brans A."/>
            <person name="Braun M."/>
            <person name="Brignell S.C."/>
            <person name="Bron S."/>
            <person name="Brouillet S."/>
            <person name="Bruschi C.V."/>
            <person name="Caldwell B."/>
            <person name="Capuano V."/>
            <person name="Carter N.M."/>
            <person name="Choi S.-K."/>
            <person name="Codani J.-J."/>
            <person name="Connerton I.F."/>
            <person name="Cummings N.J."/>
            <person name="Daniel R.A."/>
            <person name="Denizot F."/>
            <person name="Devine K.M."/>
            <person name="Duesterhoeft A."/>
            <person name="Ehrlich S.D."/>
            <person name="Emmerson P.T."/>
            <person name="Entian K.-D."/>
            <person name="Errington J."/>
            <person name="Fabret C."/>
            <person name="Ferrari E."/>
            <person name="Foulger D."/>
            <person name="Fritz C."/>
            <person name="Fujita M."/>
            <person name="Fujita Y."/>
            <person name="Fuma S."/>
            <person name="Galizzi A."/>
            <person name="Galleron N."/>
            <person name="Ghim S.-Y."/>
            <person name="Glaser P."/>
            <person name="Goffeau A."/>
            <person name="Golightly E.J."/>
            <person name="Grandi G."/>
            <person name="Guiseppi G."/>
            <person name="Guy B.J."/>
            <person name="Haga K."/>
            <person name="Haiech J."/>
            <person name="Harwood C.R."/>
            <person name="Henaut A."/>
            <person name="Hilbert H."/>
            <person name="Holsappel S."/>
            <person name="Hosono S."/>
            <person name="Hullo M.-F."/>
            <person name="Itaya M."/>
            <person name="Jones L.-M."/>
            <person name="Joris B."/>
            <person name="Karamata D."/>
            <person name="Kasahara Y."/>
            <person name="Klaerr-Blanchard M."/>
            <person name="Klein C."/>
            <person name="Kobayashi Y."/>
            <person name="Koetter P."/>
            <person name="Koningstein G."/>
            <person name="Krogh S."/>
            <person name="Kumano M."/>
            <person name="Kurita K."/>
            <person name="Lapidus A."/>
            <person name="Lardinois S."/>
            <person name="Lauber J."/>
            <person name="Lazarevic V."/>
            <person name="Lee S.-M."/>
            <person name="Levine A."/>
            <person name="Liu H."/>
            <person name="Masuda S."/>
            <person name="Mauel C."/>
            <person name="Medigue C."/>
            <person name="Medina N."/>
            <person name="Mellado R.P."/>
            <person name="Mizuno M."/>
            <person name="Moestl D."/>
            <person name="Nakai S."/>
            <person name="Noback M."/>
            <person name="Noone D."/>
            <person name="O'Reilly M."/>
            <person name="Ogawa K."/>
            <person name="Ogiwara A."/>
            <person name="Oudega B."/>
            <person name="Park S.-H."/>
            <person name="Parro V."/>
            <person name="Pohl T.M."/>
            <person name="Portetelle D."/>
            <person name="Porwollik S."/>
            <person name="Prescott A.M."/>
            <person name="Presecan E."/>
            <person name="Pujic P."/>
            <person name="Purnelle B."/>
            <person name="Rapoport G."/>
            <person name="Rey M."/>
            <person name="Reynolds S."/>
            <person name="Rieger M."/>
            <person name="Rivolta C."/>
            <person name="Rocha E."/>
            <person name="Roche B."/>
            <person name="Rose M."/>
            <person name="Sadaie Y."/>
            <person name="Sato T."/>
            <person name="Scanlan E."/>
            <person name="Schleich S."/>
            <person name="Schroeter R."/>
            <person name="Scoffone F."/>
            <person name="Sekiguchi J."/>
            <person name="Sekowska A."/>
            <person name="Seror S.J."/>
            <person name="Serror P."/>
            <person name="Shin B.-S."/>
            <person name="Soldo B."/>
            <person name="Sorokin A."/>
            <person name="Tacconi E."/>
            <person name="Takagi T."/>
            <person name="Takahashi H."/>
            <person name="Takemaru K."/>
            <person name="Takeuchi M."/>
            <person name="Tamakoshi A."/>
            <person name="Tanaka T."/>
            <person name="Terpstra P."/>
            <person name="Tognoni A."/>
            <person name="Tosato V."/>
            <person name="Uchiyama S."/>
            <person name="Vandenbol M."/>
            <person name="Vannier F."/>
            <person name="Vassarotti A."/>
            <person name="Viari A."/>
            <person name="Wambutt R."/>
            <person name="Wedler E."/>
            <person name="Wedler H."/>
            <person name="Weitzenegger T."/>
            <person name="Winters P."/>
            <person name="Wipat A."/>
            <person name="Yamamoto H."/>
            <person name="Yamane K."/>
            <person name="Yasumoto K."/>
            <person name="Yata K."/>
            <person name="Yoshida K."/>
            <person name="Yoshikawa H.-F."/>
            <person name="Zumstein E."/>
            <person name="Yoshikawa H."/>
            <person name="Danchin A."/>
        </authorList>
    </citation>
    <scope>NUCLEOTIDE SEQUENCE [LARGE SCALE GENOMIC DNA]</scope>
    <source>
        <strain>168</strain>
    </source>
</reference>
<reference key="2">
    <citation type="journal article" date="2009" name="EMBO J.">
        <title>RNase Y, a novel endoribonuclease, initiates riboswitch turnover in Bacillus subtilis.</title>
        <authorList>
            <person name="Shahbabian K."/>
            <person name="Jamalli A."/>
            <person name="Zig L."/>
            <person name="Putzer H."/>
        </authorList>
    </citation>
    <scope>FUNCTION</scope>
    <scope>COFACTOR</scope>
    <scope>ACTIVITY REGULATION</scope>
    <scope>DISRUPTION PHENOTYPE</scope>
    <scope>MUTAGENESIS OF HIS-368 AND ASP-369</scope>
    <source>
        <strain>168 / BGSC1A2</strain>
    </source>
</reference>
<reference key="3">
    <citation type="journal article" date="2009" name="Mol. Cell. Proteomics">
        <title>Novel activities of glycolytic enzymes in Bacillus subtilis: interactions with essential proteins involved in mRNA processing.</title>
        <authorList>
            <person name="Commichau F.M."/>
            <person name="Rothe F.M."/>
            <person name="Herzberg C."/>
            <person name="Wagner E."/>
            <person name="Hellwig D."/>
            <person name="Lehnik-Habrink M."/>
            <person name="Hammer E."/>
            <person name="Volker U."/>
            <person name="Stulke J."/>
        </authorList>
    </citation>
    <scope>FUNCTION IN MRNA-PROCESSING</scope>
    <scope>SUBUNIT</scope>
    <scope>DISRUPTION PHENOTYPE</scope>
    <source>
        <strain>168</strain>
    </source>
</reference>
<reference key="4">
    <citation type="journal article" date="2010" name="J. Bacteriol.">
        <title>Initiation of decay of Bacillus subtilis rpsO mRNA by endoribonuclease RNase Y.</title>
        <authorList>
            <person name="Yao S."/>
            <person name="Bechhofer D.H."/>
        </authorList>
    </citation>
    <scope>FUNCTION</scope>
    <source>
        <strain>BG1</strain>
    </source>
</reference>
<reference key="5">
    <citation type="journal article" date="2010" name="Mol. Microbiol.">
        <title>The RNA degradosome in Bacillus subtilis: identification of CshA as the major RNA helicase in the multiprotein complex.</title>
        <authorList>
            <person name="Lehnik-Habrink M."/>
            <person name="Pfortner H."/>
            <person name="Rempeters L."/>
            <person name="Pietack N."/>
            <person name="Herzberg C."/>
            <person name="Stulke J."/>
        </authorList>
    </citation>
    <scope>INTERACTION WITH CSHA</scope>
    <scope>SUBUNIT</scope>
    <scope>SUBCELLULAR LOCATION</scope>
    <source>
        <strain>168</strain>
    </source>
</reference>
<reference key="6">
    <citation type="journal article" date="2011" name="J. Bacteriol.">
        <title>RNase Y in Bacillus subtilis: a natively disordered protein that is the functional equivalent of RNase E from Escherichia coli.</title>
        <authorList>
            <person name="Lehnik-Habrink M."/>
            <person name="Newman J."/>
            <person name="Rothe F.M."/>
            <person name="Solovyova A.S."/>
            <person name="Rodrigues C."/>
            <person name="Herzberg C."/>
            <person name="Commichau F.M."/>
            <person name="Lewis R.J."/>
            <person name="Stulke J."/>
        </authorList>
    </citation>
    <scope>INTERACTION WITH CSHA; ENO; PFKA; PNP; RNJA AND RNJB</scope>
    <scope>SUBUNIT</scope>
    <scope>DOMAIN</scope>
    <source>
        <strain>168</strain>
    </source>
</reference>
<reference key="7">
    <citation type="journal article" date="2012" name="Commun. Integr. Biol.">
        <title>Identification of interaction partners of the dynamin-like protein DynA from Bacillus subtilis.</title>
        <authorList>
            <person name="Buermann F."/>
            <person name="Sawant P."/>
            <person name="Bramkamp M."/>
        </authorList>
    </citation>
    <scope>INTERACTION WITH DYNA</scope>
    <scope>SUBUNIT</scope>
    <scope>SUBCELLULAR LOCATION</scope>
    <source>
        <strain>168</strain>
    </source>
</reference>
<reference key="8">
    <citation type="journal article" date="2012" name="J. Mol. Biol.">
        <title>Dissection of the network of interactions that links RNA processing with glycolysis in the Bacillus subtilis degradosome.</title>
        <authorList>
            <person name="Newman J.A."/>
            <person name="Hewitt L."/>
            <person name="Rodrigues C."/>
            <person name="Solovyova A.S."/>
            <person name="Harwood C.R."/>
            <person name="Lewis R.J."/>
        </authorList>
    </citation>
    <scope>INTERACTION WITH ENO AND PNP</scope>
    <scope>SUBUNIT</scope>
    <source>
        <strain>168</strain>
    </source>
</reference>
<reference key="9">
    <citation type="journal article" date="2012" name="Mol. Microbiol.">
        <title>BsrG/SR4 from Bacillus subtilis--the first temperature-dependent type I toxin-antitoxin system.</title>
        <authorList>
            <person name="Jahn N."/>
            <person name="Preis H."/>
            <person name="Wiedemann C."/>
            <person name="Brantl S."/>
        </authorList>
    </citation>
    <scope>FUNCTION IN TYPE I TOXIN-ANTITOXIN BSRG/SR4 DEGRADATION</scope>
    <scope>DISRUPTION PHENOTYPE</scope>
    <source>
        <strain>168 / DB104</strain>
    </source>
</reference>
<reference key="10">
    <citation type="journal article" date="2012" name="PLoS Genet.">
        <title>Three essential ribonucleases-RNase Y, J1, and III-control the abundance of a majority of Bacillus subtilis mRNAs.</title>
        <authorList>
            <person name="Durand S."/>
            <person name="Gilet L."/>
            <person name="Bessieres P."/>
            <person name="Nicolas P."/>
            <person name="Condon C."/>
        </authorList>
    </citation>
    <scope>FUNCTION</scope>
    <scope>DISRUPTION PHENOTYPE</scope>
    <source>
        <strain>168</strain>
    </source>
</reference>
<reference key="11">
    <citation type="journal article" date="2013" name="J. Bacteriol.">
        <title>Bacillus subtilis mutants with knockouts of the genes encoding ribonucleases RNase Y and RNase J1 are viable, with major defects in cell morphology, sporulation, and competence.</title>
        <authorList>
            <person name="Figaro S."/>
            <person name="Durand S."/>
            <person name="Gilet L."/>
            <person name="Cayet N."/>
            <person name="Sachse M."/>
            <person name="Condon C."/>
        </authorList>
    </citation>
    <scope>FUNCTION</scope>
    <scope>DISRUPTION PHENOTYPE</scope>
    <source>
        <strain>168 / JH642</strain>
        <strain>168 / PY79</strain>
        <strain>168 / W168</strain>
        <strain>168 trpC2</strain>
    </source>
</reference>
<reference key="12">
    <citation type="journal article" date="2016" name="RNA Biol.">
        <title>A multistress responsive type I toxin-antitoxin system: bsrE/SR5 from the B. subtilis chromosome.</title>
        <authorList>
            <person name="Mueller P."/>
            <person name="Jahn N."/>
            <person name="Ring C."/>
            <person name="Maiwald C."/>
            <person name="Neubert R."/>
            <person name="Meissner C."/>
            <person name="Brantl S."/>
        </authorList>
    </citation>
    <scope>FUNCTION IN TYPE I TOXIN-ANTITOXIN BSRE/SR5 DEGRADATION</scope>
    <scope>DISRUPTION PHENOTYPE</scope>
    <source>
        <strain>168 / DB104</strain>
    </source>
</reference>
<accession>O31774</accession>
<gene>
    <name type="primary">rny</name>
    <name type="synonym">ymdA</name>
    <name type="ordered locus">BSU16960</name>
</gene>
<comment type="function">
    <text evidence="3 4 5 9 10 12 13">Endoribonuclease that initiates mRNA decay. Initiates the decay of all SAM-dependent riboswitches, such as yitJ riboswitch. Involved in processing of the gapA operon mRNA, it cleaves between cggR and gapA (PubMed:19193632). Is also the decay-initiating endonuclease for rpsO mRNA. Involved in degradation of type I toxin-antitoxin system bsrG/SR4 RNAs and a minor role in degradation of type I toxin-antitoxin system bsrE/SR5 degradation (PubMed:22229825, PubMed:26940229).</text>
</comment>
<comment type="cofactor">
    <cofactor evidence="4">
        <name>Mg(2+)</name>
        <dbReference type="ChEBI" id="CHEBI:18420"/>
    </cofactor>
    <cofactor evidence="4">
        <name>Mn(2+)</name>
        <dbReference type="ChEBI" id="CHEBI:29035"/>
    </cofactor>
    <cofactor evidence="4">
        <name>Zn(2+)</name>
        <dbReference type="ChEBI" id="CHEBI:29105"/>
    </cofactor>
    <text evidence="4">Magnesium. Can also use manganese or zinc.</text>
</comment>
<comment type="activity regulation">
    <text evidence="4">Shows preference for transcripts carrying a monophosphate group at the 5' end.</text>
</comment>
<comment type="subunit">
    <text evidence="3 6 7 8 11 14">Homodimer (Probable). Component of a possible RNA degradosome complex composed of rny, rnjA, rnjB, pnp, pfkA and eno (PubMed:19193632) (although rnjA and rnjB's presence is unclear). Interacts with RNA helicase CshA which may also be a member of the RNA degradosome complex (PubMed:20572937). Interacts with full-length dynamin-like protein DynA (PubMed:23060960).</text>
</comment>
<comment type="interaction">
    <interactant intactId="EBI-6415578">
        <id>O31774</id>
    </interactant>
    <interactant intactId="EBI-6415210">
        <id>P96614</id>
        <label>cshA</label>
    </interactant>
    <organismsDiffer>false</organismsDiffer>
    <experiments>2</experiments>
</comment>
<comment type="interaction">
    <interactant intactId="EBI-6415578">
        <id>O31774</id>
    </interactant>
    <interactant intactId="EBI-6415666">
        <id>P37869</id>
        <label>eno</label>
    </interactant>
    <organismsDiffer>false</organismsDiffer>
    <experiments>2</experiments>
</comment>
<comment type="interaction">
    <interactant intactId="EBI-6415578">
        <id>O31774</id>
    </interactant>
    <interactant intactId="EBI-5250040">
        <id>O34529</id>
        <label>pfkA</label>
    </interactant>
    <organismsDiffer>false</organismsDiffer>
    <experiments>2</experiments>
</comment>
<comment type="interaction">
    <interactant intactId="EBI-6415578">
        <id>O31774</id>
    </interactant>
    <interactant intactId="EBI-5254714">
        <id>P50849</id>
        <label>pnp</label>
    </interactant>
    <organismsDiffer>false</organismsDiffer>
    <experiments>2</experiments>
</comment>
<comment type="interaction">
    <interactant intactId="EBI-6415578">
        <id>O31774</id>
    </interactant>
    <interactant intactId="EBI-6415229">
        <id>Q45493</id>
        <label>rnjA</label>
    </interactant>
    <organismsDiffer>false</organismsDiffer>
    <experiments>2</experiments>
</comment>
<comment type="interaction">
    <interactant intactId="EBI-6415578">
        <id>O31774</id>
    </interactant>
    <interactant intactId="EBI-6415578">
        <id>O31774</id>
        <label>rny</label>
    </interactant>
    <organismsDiffer>false</organismsDiffer>
    <experiments>4</experiments>
</comment>
<comment type="subcellular location">
    <subcellularLocation>
        <location evidence="6">Cell membrane</location>
        <topology evidence="6">Single-pass membrane protein</topology>
    </subcellularLocation>
    <text evidence="11">Dispersed along membrane with a few foci at septation sites and cell poles; in the absence of dynA fewer foci are seen, in the absence of minJ no foci are seen.</text>
</comment>
<comment type="domain">
    <text evidence="7">Has 5 domains: N-terminal transmembrane, coiled-coil, KH, HD and an unnamed conserved C-terminal domain (residues 430-520). Both the N-terminal transmembrane helix and C-terminal domain are required for protein function in vivo.</text>
</comment>
<comment type="disruption phenotype">
    <text evidence="3 4 9 10 12">Essential; depletion mutants show a significant increase in global mRNA half-life (PubMed:19779461) a decrease in at least 1 specific mRNA processing event (PubMed:19193632); in a more severe depletion experiment alteration of about 26% of transcripts was seen (PubMed:22412379). Later shown not to be essential in 4 strains, with a doubled doubling time, cells are translucent, suggesting a possible cell surface defect. 168 trpC2 cells able to grow on minimal medium. Loss of competence for plasmid transformation, 1000-fold less sporulation. Increased sensitivity to a wide range of antibiotics. Thinner cells form long curved structures of 2-3 cell lengths, cell walls are altered with looser, considerably less dense peptidoglycan. Double pnp-rny mutants grow very slowly, while rnjA-rny mutants could not be isolated (PubMed:23504012). Increased half-life of type I toxin-antitoxin system RNAs of BsrG/SR4 (PubMed:22229825).</text>
</comment>
<comment type="similarity">
    <text evidence="14">Belongs to the RNase Y family.</text>
</comment>
<protein>
    <recommendedName>
        <fullName>Ribonuclease Y</fullName>
        <shortName>RNase Y</shortName>
        <ecNumber>3.1.-.-</ecNumber>
    </recommendedName>
</protein>
<organism>
    <name type="scientific">Bacillus subtilis (strain 168)</name>
    <dbReference type="NCBI Taxonomy" id="224308"/>
    <lineage>
        <taxon>Bacteria</taxon>
        <taxon>Bacillati</taxon>
        <taxon>Bacillota</taxon>
        <taxon>Bacilli</taxon>
        <taxon>Bacillales</taxon>
        <taxon>Bacillaceae</taxon>
        <taxon>Bacillus</taxon>
    </lineage>
</organism>
<evidence type="ECO:0000255" key="1"/>
<evidence type="ECO:0000255" key="2">
    <source>
        <dbReference type="PROSITE-ProRule" id="PRU01175"/>
    </source>
</evidence>
<evidence type="ECO:0000269" key="3">
    <source>
    </source>
</evidence>
<evidence type="ECO:0000269" key="4">
    <source>
    </source>
</evidence>
<evidence type="ECO:0000269" key="5">
    <source>
    </source>
</evidence>
<evidence type="ECO:0000269" key="6">
    <source>
    </source>
</evidence>
<evidence type="ECO:0000269" key="7">
    <source>
    </source>
</evidence>
<evidence type="ECO:0000269" key="8">
    <source>
    </source>
</evidence>
<evidence type="ECO:0000269" key="9">
    <source>
    </source>
</evidence>
<evidence type="ECO:0000269" key="10">
    <source>
    </source>
</evidence>
<evidence type="ECO:0000269" key="11">
    <source>
    </source>
</evidence>
<evidence type="ECO:0000269" key="12">
    <source>
    </source>
</evidence>
<evidence type="ECO:0000269" key="13">
    <source>
    </source>
</evidence>
<evidence type="ECO:0000305" key="14"/>
<sequence length="520" mass="58919">MTPIMMVLISILLILLGLVVGYFVRKTIAEAKIAGARGAAEQILEDAKRDAEALKKEALLEAKDEIHKLRIDAEQEVRERRNELQKQENRLLQKEENLDRKHEGIDKREAMLEKKDHSLNERQQHIEEMESKVDEMIRMQQSELERISSLTRDEAKQIILERVENELSHDIAIMTKETENRAKEEADKKAKNILSLALQRCAADHVAETTVSVVNLPNDEMKGRIIGREGRNIRTLETLTGIDLIIDDTPEAVILSGFDPIRRETARIALDKLVQDGRIHPARIEEMVEKSRREVDDYIREMGEQTTFEVGVHGLHPDLIKILGRLKFRTSYGQNVLKHSMEVAFLAGLMASELGEDAKLAKRAGLLHDIGKAIDHEVEGSHVEIGVELATKYKEHPVVINSIASHHGDEEPTSIIAVLVAAADALSAARPGARSETLENYIRRLEKLEEISESYEGVEKSFAIQAGREVRIMVKPDSINDLEAHRLARDIRKRIEDELDYPGHIKVTVIRETRAVEYAK</sequence>